<evidence type="ECO:0000250" key="1"/>
<evidence type="ECO:0000255" key="2"/>
<evidence type="ECO:0000256" key="3">
    <source>
        <dbReference type="SAM" id="MobiDB-lite"/>
    </source>
</evidence>
<evidence type="ECO:0000269" key="4">
    <source>
    </source>
</evidence>
<evidence type="ECO:0000269" key="5">
    <source>
    </source>
</evidence>
<evidence type="ECO:0000305" key="6"/>
<reference key="1">
    <citation type="journal article" date="1998" name="Nature">
        <title>Glutamate-receptor genes in plants.</title>
        <authorList>
            <person name="Lam H.-M."/>
            <person name="Chiu J.C."/>
            <person name="Hsieh M.-H."/>
            <person name="Meisel L."/>
            <person name="Oliveira I.C."/>
            <person name="Shin M."/>
            <person name="Coruzzi G.M."/>
        </authorList>
    </citation>
    <scope>NUCLEOTIDE SEQUENCE [MRNA]</scope>
    <source>
        <strain>cv. Columbia</strain>
    </source>
</reference>
<reference key="2">
    <citation type="journal article" date="2009" name="Plant J.">
        <title>De-regulated expression of the plant glutamate receptor homolog AtGLR3.1 impairs long-term Ca2+-programmed stomatal closure.</title>
        <authorList>
            <person name="Cho D."/>
            <person name="Kim S.A."/>
            <person name="Murata Y."/>
            <person name="Lee S."/>
            <person name="Jae S.-K."/>
            <person name="Nam H.G."/>
            <person name="Kwak J.M."/>
        </authorList>
    </citation>
    <scope>NUCLEOTIDE SEQUENCE [MRNA]</scope>
    <scope>FUNCTION</scope>
    <scope>TISSUE SPECIFICITY</scope>
</reference>
<reference key="3">
    <citation type="submission" date="2003-12" db="EMBL/GenBank/DDBJ databases">
        <title>A full length cDNA of AtGLR3.1 identified and sequenced from an EST.</title>
        <authorList>
            <person name="Liu L.-H."/>
            <person name="Tester M."/>
        </authorList>
    </citation>
    <scope>NUCLEOTIDE SEQUENCE [MRNA]</scope>
</reference>
<reference key="4">
    <citation type="journal article" date="1999" name="Nature">
        <title>Sequence and analysis of chromosome 2 of the plant Arabidopsis thaliana.</title>
        <authorList>
            <person name="Lin X."/>
            <person name="Kaul S."/>
            <person name="Rounsley S.D."/>
            <person name="Shea T.P."/>
            <person name="Benito M.-I."/>
            <person name="Town C.D."/>
            <person name="Fujii C.Y."/>
            <person name="Mason T.M."/>
            <person name="Bowman C.L."/>
            <person name="Barnstead M.E."/>
            <person name="Feldblyum T.V."/>
            <person name="Buell C.R."/>
            <person name="Ketchum K.A."/>
            <person name="Lee J.J."/>
            <person name="Ronning C.M."/>
            <person name="Koo H.L."/>
            <person name="Moffat K.S."/>
            <person name="Cronin L.A."/>
            <person name="Shen M."/>
            <person name="Pai G."/>
            <person name="Van Aken S."/>
            <person name="Umayam L."/>
            <person name="Tallon L.J."/>
            <person name="Gill J.E."/>
            <person name="Adams M.D."/>
            <person name="Carrera A.J."/>
            <person name="Creasy T.H."/>
            <person name="Goodman H.M."/>
            <person name="Somerville C.R."/>
            <person name="Copenhaver G.P."/>
            <person name="Preuss D."/>
            <person name="Nierman W.C."/>
            <person name="White O."/>
            <person name="Eisen J.A."/>
            <person name="Salzberg S.L."/>
            <person name="Fraser C.M."/>
            <person name="Venter J.C."/>
        </authorList>
    </citation>
    <scope>NUCLEOTIDE SEQUENCE [LARGE SCALE GENOMIC DNA]</scope>
    <source>
        <strain>cv. Columbia</strain>
    </source>
</reference>
<reference key="5">
    <citation type="journal article" date="2017" name="Plant J.">
        <title>Araport11: a complete reannotation of the Arabidopsis thaliana reference genome.</title>
        <authorList>
            <person name="Cheng C.Y."/>
            <person name="Krishnakumar V."/>
            <person name="Chan A.P."/>
            <person name="Thibaud-Nissen F."/>
            <person name="Schobel S."/>
            <person name="Town C.D."/>
        </authorList>
    </citation>
    <scope>GENOME REANNOTATION</scope>
    <source>
        <strain>cv. Columbia</strain>
    </source>
</reference>
<reference key="6">
    <citation type="journal article" date="2001" name="Science">
        <title>The identity of plant glutamate receptors.</title>
        <authorList>
            <person name="Lacombe B."/>
            <person name="Becker D."/>
            <person name="Hedrich R."/>
            <person name="DeSalle R."/>
            <person name="Hollmann M."/>
            <person name="Kwak J.M."/>
            <person name="Schroeder J.I."/>
            <person name="Le Novere N."/>
            <person name="Nam H.G."/>
            <person name="Spalding E.P."/>
            <person name="Tester M."/>
            <person name="Turano F.J."/>
            <person name="Chiu J."/>
            <person name="Coruzzi G."/>
        </authorList>
    </citation>
    <scope>GENE FAMILY</scope>
    <scope>NOMENCLATURE</scope>
</reference>
<reference key="7">
    <citation type="journal article" date="2002" name="Mol. Biol. Evol.">
        <title>Phylogenetic and expression analysis of the glutamate-receptor-like gene family in Arabidopsis thaliana.</title>
        <authorList>
            <person name="Chiu J.C."/>
            <person name="Brenner E.D."/>
            <person name="DeSalle R."/>
            <person name="Nitabach M.N."/>
            <person name="Holmes T.C."/>
            <person name="Coruzzi G.M."/>
        </authorList>
    </citation>
    <scope>TISSUE SPECIFICITY</scope>
</reference>
<dbReference type="EMBL" id="AF079999">
    <property type="protein sequence ID" value="AAD09174.1"/>
    <property type="status" value="ALT_INIT"/>
    <property type="molecule type" value="mRNA"/>
</dbReference>
<dbReference type="EMBL" id="AF038557">
    <property type="protein sequence ID" value="AAB92421.1"/>
    <property type="status" value="ALT_INIT"/>
    <property type="molecule type" value="mRNA"/>
</dbReference>
<dbReference type="EMBL" id="AY495448">
    <property type="protein sequence ID" value="AAR88099.1"/>
    <property type="molecule type" value="mRNA"/>
</dbReference>
<dbReference type="EMBL" id="CP002685">
    <property type="protein sequence ID" value="AEC06604.2"/>
    <property type="molecule type" value="Genomic_DNA"/>
</dbReference>
<dbReference type="PIR" id="T51132">
    <property type="entry name" value="T51132"/>
</dbReference>
<dbReference type="PIR" id="T51133">
    <property type="entry name" value="T51133"/>
</dbReference>
<dbReference type="RefSeq" id="NP_001318239.1">
    <property type="nucleotide sequence ID" value="NM_001335544.1"/>
</dbReference>
<dbReference type="SMR" id="Q7XJL2"/>
<dbReference type="BioGRID" id="1588">
    <property type="interactions" value="2"/>
</dbReference>
<dbReference type="FunCoup" id="Q7XJL2">
    <property type="interactions" value="207"/>
</dbReference>
<dbReference type="STRING" id="3702.Q7XJL2"/>
<dbReference type="GlyCosmos" id="Q7XJL2">
    <property type="glycosylation" value="8 sites, No reported glycans"/>
</dbReference>
<dbReference type="GlyGen" id="Q7XJL2">
    <property type="glycosylation" value="8 sites"/>
</dbReference>
<dbReference type="PaxDb" id="3702-AT2G17260.1"/>
<dbReference type="EnsemblPlants" id="AT2G17260.1">
    <property type="protein sequence ID" value="AT2G17260.1"/>
    <property type="gene ID" value="AT2G17260"/>
</dbReference>
<dbReference type="GeneID" id="816231"/>
<dbReference type="Gramene" id="AT2G17260.1">
    <property type="protein sequence ID" value="AT2G17260.1"/>
    <property type="gene ID" value="AT2G17260"/>
</dbReference>
<dbReference type="KEGG" id="ath:AT2G17260"/>
<dbReference type="Araport" id="AT2G17260"/>
<dbReference type="TAIR" id="AT2G17260">
    <property type="gene designation" value="GLR2"/>
</dbReference>
<dbReference type="eggNOG" id="KOG1052">
    <property type="taxonomic scope" value="Eukaryota"/>
</dbReference>
<dbReference type="HOGENOM" id="CLU_007358_0_1_1"/>
<dbReference type="InParanoid" id="Q7XJL2"/>
<dbReference type="OMA" id="FMKARSE"/>
<dbReference type="PhylomeDB" id="Q7XJL2"/>
<dbReference type="PRO" id="PR:Q7XJL2"/>
<dbReference type="Proteomes" id="UP000006548">
    <property type="component" value="Chromosome 2"/>
</dbReference>
<dbReference type="ExpressionAtlas" id="Q7XJL2">
    <property type="expression patterns" value="baseline and differential"/>
</dbReference>
<dbReference type="GO" id="GO:0005886">
    <property type="term" value="C:plasma membrane"/>
    <property type="evidence" value="ECO:0000250"/>
    <property type="project" value="UniProtKB"/>
</dbReference>
<dbReference type="GO" id="GO:0005262">
    <property type="term" value="F:calcium channel activity"/>
    <property type="evidence" value="ECO:0000250"/>
    <property type="project" value="UniProtKB"/>
</dbReference>
<dbReference type="GO" id="GO:0008066">
    <property type="term" value="F:glutamate receptor activity"/>
    <property type="evidence" value="ECO:0000250"/>
    <property type="project" value="UniProtKB"/>
</dbReference>
<dbReference type="GO" id="GO:0015276">
    <property type="term" value="F:ligand-gated monoatomic ion channel activity"/>
    <property type="evidence" value="ECO:0007669"/>
    <property type="project" value="InterPro"/>
</dbReference>
<dbReference type="GO" id="GO:0006816">
    <property type="term" value="P:calcium ion transport"/>
    <property type="evidence" value="ECO:0000250"/>
    <property type="project" value="UniProtKB"/>
</dbReference>
<dbReference type="GO" id="GO:0019722">
    <property type="term" value="P:calcium-mediated signaling"/>
    <property type="evidence" value="ECO:0000250"/>
    <property type="project" value="UniProtKB"/>
</dbReference>
<dbReference type="GO" id="GO:0071230">
    <property type="term" value="P:cellular response to amino acid stimulus"/>
    <property type="evidence" value="ECO:0000250"/>
    <property type="project" value="UniProtKB"/>
</dbReference>
<dbReference type="CDD" id="cd13686">
    <property type="entry name" value="GluR_Plant"/>
    <property type="match status" value="1"/>
</dbReference>
<dbReference type="CDD" id="cd19990">
    <property type="entry name" value="PBP1_GABAb_receptor_plant"/>
    <property type="match status" value="1"/>
</dbReference>
<dbReference type="FunFam" id="1.10.287.70:FF:000037">
    <property type="entry name" value="Glutamate receptor"/>
    <property type="match status" value="1"/>
</dbReference>
<dbReference type="FunFam" id="3.40.190.10:FF:000054">
    <property type="entry name" value="Glutamate receptor"/>
    <property type="match status" value="1"/>
</dbReference>
<dbReference type="FunFam" id="3.40.190.10:FF:000175">
    <property type="entry name" value="Glutamate receptor"/>
    <property type="match status" value="1"/>
</dbReference>
<dbReference type="FunFam" id="3.40.50.2300:FF:000081">
    <property type="entry name" value="Glutamate receptor"/>
    <property type="match status" value="1"/>
</dbReference>
<dbReference type="Gene3D" id="1.10.287.70">
    <property type="match status" value="1"/>
</dbReference>
<dbReference type="Gene3D" id="3.40.50.2300">
    <property type="match status" value="2"/>
</dbReference>
<dbReference type="Gene3D" id="3.40.190.10">
    <property type="entry name" value="Periplasmic binding protein-like II"/>
    <property type="match status" value="3"/>
</dbReference>
<dbReference type="InterPro" id="IPR001828">
    <property type="entry name" value="ANF_lig-bd_rcpt"/>
</dbReference>
<dbReference type="InterPro" id="IPR044440">
    <property type="entry name" value="GABAb_receptor_plant_PBP1"/>
</dbReference>
<dbReference type="InterPro" id="IPR015683">
    <property type="entry name" value="Ionotropic_Glu_rcpt"/>
</dbReference>
<dbReference type="InterPro" id="IPR001320">
    <property type="entry name" value="Iontro_rcpt_C"/>
</dbReference>
<dbReference type="InterPro" id="IPR017103">
    <property type="entry name" value="Iontropic_Glu_rcpt_pln"/>
</dbReference>
<dbReference type="InterPro" id="IPR028082">
    <property type="entry name" value="Peripla_BP_I"/>
</dbReference>
<dbReference type="InterPro" id="IPR001638">
    <property type="entry name" value="Solute-binding_3/MltF_N"/>
</dbReference>
<dbReference type="PANTHER" id="PTHR18966">
    <property type="entry name" value="IONOTROPIC GLUTAMATE RECEPTOR"/>
    <property type="match status" value="1"/>
</dbReference>
<dbReference type="Pfam" id="PF01094">
    <property type="entry name" value="ANF_receptor"/>
    <property type="match status" value="1"/>
</dbReference>
<dbReference type="Pfam" id="PF00060">
    <property type="entry name" value="Lig_chan"/>
    <property type="match status" value="1"/>
</dbReference>
<dbReference type="Pfam" id="PF00497">
    <property type="entry name" value="SBP_bac_3"/>
    <property type="match status" value="1"/>
</dbReference>
<dbReference type="PIRSF" id="PIRSF037090">
    <property type="entry name" value="Iontro_Glu-like_rcpt_pln"/>
    <property type="match status" value="1"/>
</dbReference>
<dbReference type="SMART" id="SM00079">
    <property type="entry name" value="PBPe"/>
    <property type="match status" value="1"/>
</dbReference>
<dbReference type="SUPFAM" id="SSF53822">
    <property type="entry name" value="Periplasmic binding protein-like I"/>
    <property type="match status" value="1"/>
</dbReference>
<dbReference type="SUPFAM" id="SSF53850">
    <property type="entry name" value="Periplasmic binding protein-like II"/>
    <property type="match status" value="1"/>
</dbReference>
<proteinExistence type="evidence at transcript level"/>
<name>GLR31_ARATH</name>
<sequence>MLSSMNWVLLSFIIVLGGGLLLSEGASSSRPPVIKVGAIFGLNTMYGETANIAFKAAEEDVNSDPSFLGGSKLRILMNDAKRSGFLSIMGALQFMETDVVAIIGPQTSIMAHVLSHLANELTVPMLSFTALDPTLSPLQFPFFVQTAPSDLFLMRAIAEMITYYGWSDVVALYNDDDNSRNGVTALGDELEERRCKISYKAVLPLDVVITSPVEIIEELIKIRGMESRVIVVNTFPNTGKMIFKEAERLGMMEKGYVWIATTWLSSVLDSNLPLDTKLVNGVLTLRLHTPDSRKKRDFAARWKNKLSNNKTIGLNVYGLYAYDTVWIIARAVKTLLEAGGNLSFSNDAKLGSLKGEALNLSALSRFDQGSQLLDYIVHTKMSGLTGPVQFHPDRSMLQPSYDIINLVDDRVHQIGYWSNYSGLSIVPPESFYSKPPNRSSSNQHLNSVTWPGGTSVTPRGWIFRNNGRRLRIGVPDRASFKDFVSRVNGSSNKVQGYCIDVFEAAVKLLSYPVPHEFIFFGDGLTNPNYNELVNKVTTGVDFDAVVGDIAIVTKRTRIVDFTQPYIESGLVVVAPVTRLNENPWAFLRPFTLPMWAVTASFFVIVGAAIWILEHRINDEFRGPPRRQIITILWFTFSTMFFSHRETTVSTLGRMVLLIWLFVVLIITSSYTASLTSILTVQQLNSPIKGVDTLISSTGRIGFQVGSFAENYMTDELNIASSRLVPLASPEEYANALQNGTVAAIVDERPYIDLFLSDYCKFAIRGQEFTRCGWGFAFPRDSPLAVDMSTAILGLSETGELQKIHDRWLSKSNCSSPHGSQSGDSEQLNVHSFWGMFLVVGIACLVALFIHFFKIIRDFCKDTPEVVVEEAIPSPKSSRLTKLQTFLAFVDEKEEETKRRLKRKRNNDHSMNANSIISRTASRRPI</sequence>
<gene>
    <name type="primary">GLR3.1</name>
    <name type="synonym">ACL1</name>
    <name type="synonym">GLR2</name>
    <name type="ordered locus">At2g17260</name>
    <name type="ORF">F5J6.2</name>
</gene>
<comment type="function">
    <text evidence="5">Glutamate-gated receptor that probably acts as a non-selective cation channel. May be involved in light-signal transduction and calcium homeostasis via the regulation of calcium influx into cells. Required for the long-term calcium oscillation-regulated stomatal movements.</text>
</comment>
<comment type="subunit">
    <text evidence="1">May form heteromers.</text>
</comment>
<comment type="subcellular location">
    <subcellularLocation>
        <location>Membrane</location>
        <topology>Multi-pass membrane protein</topology>
    </subcellularLocation>
</comment>
<comment type="tissue specificity">
    <text evidence="4 5">Expressed predominantly in roots. Firt detected in the vascular tissues of the cotyledons, and later in the vasculature of all organs. In leaves, preferentially expressed in guard cells.</text>
</comment>
<comment type="similarity">
    <text evidence="6">Belongs to the glutamate-gated ion channel (TC 1.A.10.1) family.</text>
</comment>
<comment type="sequence caution" evidence="6">
    <conflict type="erroneous initiation">
        <sequence resource="EMBL-CDS" id="AAB92421"/>
    </conflict>
    <text>Extended N-terminus.</text>
</comment>
<comment type="sequence caution" evidence="6">
    <conflict type="erroneous initiation">
        <sequence resource="EMBL-CDS" id="AAD09174"/>
    </conflict>
    <text>Extended N-terminus.</text>
</comment>
<organism>
    <name type="scientific">Arabidopsis thaliana</name>
    <name type="common">Mouse-ear cress</name>
    <dbReference type="NCBI Taxonomy" id="3702"/>
    <lineage>
        <taxon>Eukaryota</taxon>
        <taxon>Viridiplantae</taxon>
        <taxon>Streptophyta</taxon>
        <taxon>Embryophyta</taxon>
        <taxon>Tracheophyta</taxon>
        <taxon>Spermatophyta</taxon>
        <taxon>Magnoliopsida</taxon>
        <taxon>eudicotyledons</taxon>
        <taxon>Gunneridae</taxon>
        <taxon>Pentapetalae</taxon>
        <taxon>rosids</taxon>
        <taxon>malvids</taxon>
        <taxon>Brassicales</taxon>
        <taxon>Brassicaceae</taxon>
        <taxon>Camelineae</taxon>
        <taxon>Arabidopsis</taxon>
    </lineage>
</organism>
<accession>Q7XJL2</accession>
<accession>F4IMH4</accession>
<accession>O49119</accession>
<accession>Q6RKN5</accession>
<accession>Q9ZT36</accession>
<feature type="signal peptide" evidence="2">
    <location>
        <begin position="1"/>
        <end position="25"/>
    </location>
</feature>
<feature type="chain" id="PRO_0000011605" description="Glutamate receptor 3.1">
    <location>
        <begin position="26"/>
        <end position="925"/>
    </location>
</feature>
<feature type="topological domain" description="Extracellular" evidence="2">
    <location>
        <begin position="26"/>
        <end position="591"/>
    </location>
</feature>
<feature type="transmembrane region" description="Helical" evidence="2">
    <location>
        <begin position="592"/>
        <end position="612"/>
    </location>
</feature>
<feature type="topological domain" description="Cytoplasmic" evidence="2">
    <location>
        <begin position="613"/>
        <end position="621"/>
    </location>
</feature>
<feature type="transmembrane region" description="Helical" evidence="2">
    <location>
        <begin position="622"/>
        <end position="642"/>
    </location>
</feature>
<feature type="topological domain" description="Cytoplasmic" evidence="2">
    <location>
        <begin position="643"/>
        <end position="653"/>
    </location>
</feature>
<feature type="transmembrane region" description="Helical" evidence="2">
    <location>
        <begin position="654"/>
        <end position="674"/>
    </location>
</feature>
<feature type="topological domain" description="Extracellular" evidence="2">
    <location>
        <begin position="675"/>
        <end position="831"/>
    </location>
</feature>
<feature type="transmembrane region" description="Helical" evidence="2">
    <location>
        <begin position="832"/>
        <end position="852"/>
    </location>
</feature>
<feature type="topological domain" description="Cytoplasmic" evidence="2">
    <location>
        <begin position="853"/>
        <end position="925"/>
    </location>
</feature>
<feature type="region of interest" description="Disordered" evidence="3">
    <location>
        <begin position="897"/>
        <end position="925"/>
    </location>
</feature>
<feature type="compositionally biased region" description="Polar residues" evidence="3">
    <location>
        <begin position="908"/>
        <end position="919"/>
    </location>
</feature>
<feature type="glycosylation site" description="N-linked (GlcNAc...) asparagine" evidence="2">
    <location>
        <position position="309"/>
    </location>
</feature>
<feature type="glycosylation site" description="N-linked (GlcNAc...) asparagine" evidence="2">
    <location>
        <position position="341"/>
    </location>
</feature>
<feature type="glycosylation site" description="N-linked (GlcNAc...) asparagine" evidence="2">
    <location>
        <position position="359"/>
    </location>
</feature>
<feature type="glycosylation site" description="N-linked (GlcNAc...) asparagine" evidence="2">
    <location>
        <position position="419"/>
    </location>
</feature>
<feature type="glycosylation site" description="N-linked (GlcNAc...) asparagine" evidence="2">
    <location>
        <position position="437"/>
    </location>
</feature>
<feature type="glycosylation site" description="N-linked (GlcNAc...) asparagine" evidence="2">
    <location>
        <position position="488"/>
    </location>
</feature>
<feature type="glycosylation site" description="N-linked (GlcNAc...) asparagine" evidence="2">
    <location>
        <position position="738"/>
    </location>
</feature>
<feature type="glycosylation site" description="N-linked (GlcNAc...) asparagine" evidence="2">
    <location>
        <position position="812"/>
    </location>
</feature>
<feature type="sequence conflict" description="In Ref. 2; AAB92421." evidence="6" ref="2">
    <original>M</original>
    <variation>V</variation>
    <location>
        <position position="5"/>
    </location>
</feature>
<feature type="sequence conflict" description="In Ref. 2; AAB92421." evidence="6" ref="2">
    <original>I</original>
    <variation>M</variation>
    <location>
        <position position="13"/>
    </location>
</feature>
<feature type="sequence conflict" description="In Ref. 2; AAB92421." evidence="6" ref="2">
    <original>HS</original>
    <variation>RT</variation>
    <location>
        <begin position="830"/>
        <end position="831"/>
    </location>
</feature>
<keyword id="KW-0325">Glycoprotein</keyword>
<keyword id="KW-0407">Ion channel</keyword>
<keyword id="KW-0406">Ion transport</keyword>
<keyword id="KW-1071">Ligand-gated ion channel</keyword>
<keyword id="KW-0472">Membrane</keyword>
<keyword id="KW-0675">Receptor</keyword>
<keyword id="KW-1185">Reference proteome</keyword>
<keyword id="KW-0732">Signal</keyword>
<keyword id="KW-0812">Transmembrane</keyword>
<keyword id="KW-1133">Transmembrane helix</keyword>
<keyword id="KW-0813">Transport</keyword>
<protein>
    <recommendedName>
        <fullName>Glutamate receptor 3.1</fullName>
        <shortName>AtGLR2</shortName>
    </recommendedName>
    <alternativeName>
        <fullName>Ligand-gated ion channel 3.1</fullName>
    </alternativeName>
</protein>